<feature type="chain" id="PRO_0000063026" description="Chaperone protein HtpG">
    <location>
        <begin position="1"/>
        <end position="618"/>
    </location>
</feature>
<feature type="region of interest" description="A; substrate-binding" evidence="1">
    <location>
        <begin position="1"/>
        <end position="331"/>
    </location>
</feature>
<feature type="region of interest" description="B" evidence="1">
    <location>
        <begin position="332"/>
        <end position="541"/>
    </location>
</feature>
<feature type="region of interest" description="C" evidence="1">
    <location>
        <begin position="542"/>
        <end position="618"/>
    </location>
</feature>
<comment type="function">
    <text evidence="1">Molecular chaperone. Has ATPase activity.</text>
</comment>
<comment type="subunit">
    <text evidence="1">Homodimer.</text>
</comment>
<comment type="subcellular location">
    <subcellularLocation>
        <location evidence="1">Cytoplasm</location>
    </subcellularLocation>
</comment>
<comment type="similarity">
    <text evidence="1">Belongs to the heat shock protein 90 family.</text>
</comment>
<protein>
    <recommendedName>
        <fullName evidence="1">Chaperone protein HtpG</fullName>
    </recommendedName>
    <alternativeName>
        <fullName evidence="1">Heat shock protein HtpG</fullName>
    </alternativeName>
    <alternativeName>
        <fullName evidence="1">High temperature protein G</fullName>
    </alternativeName>
</protein>
<organism>
    <name type="scientific">Wolinella succinogenes (strain ATCC 29543 / DSM 1740 / CCUG 13145 / JCM 31913 / LMG 7466 / NCTC 11488 / FDC 602W)</name>
    <name type="common">Vibrio succinogenes</name>
    <dbReference type="NCBI Taxonomy" id="273121"/>
    <lineage>
        <taxon>Bacteria</taxon>
        <taxon>Pseudomonadati</taxon>
        <taxon>Campylobacterota</taxon>
        <taxon>Epsilonproteobacteria</taxon>
        <taxon>Campylobacterales</taxon>
        <taxon>Helicobacteraceae</taxon>
        <taxon>Wolinella</taxon>
    </lineage>
</organism>
<keyword id="KW-0067">ATP-binding</keyword>
<keyword id="KW-0143">Chaperone</keyword>
<keyword id="KW-0963">Cytoplasm</keyword>
<keyword id="KW-0547">Nucleotide-binding</keyword>
<keyword id="KW-1185">Reference proteome</keyword>
<keyword id="KW-0346">Stress response</keyword>
<evidence type="ECO:0000255" key="1">
    <source>
        <dbReference type="HAMAP-Rule" id="MF_00505"/>
    </source>
</evidence>
<dbReference type="EMBL" id="BX571661">
    <property type="protein sequence ID" value="CAE10761.1"/>
    <property type="molecule type" value="Genomic_DNA"/>
</dbReference>
<dbReference type="SMR" id="Q7M8C4"/>
<dbReference type="STRING" id="273121.WS1737"/>
<dbReference type="KEGG" id="wsu:WS1737"/>
<dbReference type="eggNOG" id="COG0326">
    <property type="taxonomic scope" value="Bacteria"/>
</dbReference>
<dbReference type="HOGENOM" id="CLU_006684_3_0_7"/>
<dbReference type="Proteomes" id="UP000000422">
    <property type="component" value="Chromosome"/>
</dbReference>
<dbReference type="GO" id="GO:0005737">
    <property type="term" value="C:cytoplasm"/>
    <property type="evidence" value="ECO:0007669"/>
    <property type="project" value="UniProtKB-SubCell"/>
</dbReference>
<dbReference type="GO" id="GO:0005524">
    <property type="term" value="F:ATP binding"/>
    <property type="evidence" value="ECO:0007669"/>
    <property type="project" value="UniProtKB-UniRule"/>
</dbReference>
<dbReference type="GO" id="GO:0016887">
    <property type="term" value="F:ATP hydrolysis activity"/>
    <property type="evidence" value="ECO:0007669"/>
    <property type="project" value="InterPro"/>
</dbReference>
<dbReference type="GO" id="GO:0140662">
    <property type="term" value="F:ATP-dependent protein folding chaperone"/>
    <property type="evidence" value="ECO:0007669"/>
    <property type="project" value="InterPro"/>
</dbReference>
<dbReference type="GO" id="GO:0051082">
    <property type="term" value="F:unfolded protein binding"/>
    <property type="evidence" value="ECO:0007669"/>
    <property type="project" value="UniProtKB-UniRule"/>
</dbReference>
<dbReference type="CDD" id="cd16927">
    <property type="entry name" value="HATPase_Hsp90-like"/>
    <property type="match status" value="1"/>
</dbReference>
<dbReference type="FunFam" id="3.30.230.80:FF:000002">
    <property type="entry name" value="Molecular chaperone HtpG"/>
    <property type="match status" value="1"/>
</dbReference>
<dbReference type="FunFam" id="3.30.565.10:FF:000009">
    <property type="entry name" value="Molecular chaperone HtpG"/>
    <property type="match status" value="1"/>
</dbReference>
<dbReference type="Gene3D" id="3.30.230.80">
    <property type="match status" value="1"/>
</dbReference>
<dbReference type="Gene3D" id="3.40.50.11260">
    <property type="match status" value="1"/>
</dbReference>
<dbReference type="Gene3D" id="1.20.120.790">
    <property type="entry name" value="Heat shock protein 90, C-terminal domain"/>
    <property type="match status" value="1"/>
</dbReference>
<dbReference type="Gene3D" id="3.30.565.10">
    <property type="entry name" value="Histidine kinase-like ATPase, C-terminal domain"/>
    <property type="match status" value="1"/>
</dbReference>
<dbReference type="HAMAP" id="MF_00505">
    <property type="entry name" value="HSP90"/>
    <property type="match status" value="1"/>
</dbReference>
<dbReference type="InterPro" id="IPR036890">
    <property type="entry name" value="HATPase_C_sf"/>
</dbReference>
<dbReference type="InterPro" id="IPR019805">
    <property type="entry name" value="Heat_shock_protein_90_CS"/>
</dbReference>
<dbReference type="InterPro" id="IPR037196">
    <property type="entry name" value="HSP90_C"/>
</dbReference>
<dbReference type="InterPro" id="IPR001404">
    <property type="entry name" value="Hsp90_fam"/>
</dbReference>
<dbReference type="InterPro" id="IPR020575">
    <property type="entry name" value="Hsp90_N"/>
</dbReference>
<dbReference type="InterPro" id="IPR020568">
    <property type="entry name" value="Ribosomal_Su5_D2-typ_SF"/>
</dbReference>
<dbReference type="NCBIfam" id="NF003555">
    <property type="entry name" value="PRK05218.1"/>
    <property type="match status" value="1"/>
</dbReference>
<dbReference type="PANTHER" id="PTHR11528">
    <property type="entry name" value="HEAT SHOCK PROTEIN 90 FAMILY MEMBER"/>
    <property type="match status" value="1"/>
</dbReference>
<dbReference type="Pfam" id="PF13589">
    <property type="entry name" value="HATPase_c_3"/>
    <property type="match status" value="1"/>
</dbReference>
<dbReference type="Pfam" id="PF00183">
    <property type="entry name" value="HSP90"/>
    <property type="match status" value="1"/>
</dbReference>
<dbReference type="PIRSF" id="PIRSF002583">
    <property type="entry name" value="Hsp90"/>
    <property type="match status" value="1"/>
</dbReference>
<dbReference type="PRINTS" id="PR00775">
    <property type="entry name" value="HEATSHOCK90"/>
</dbReference>
<dbReference type="SUPFAM" id="SSF55874">
    <property type="entry name" value="ATPase domain of HSP90 chaperone/DNA topoisomerase II/histidine kinase"/>
    <property type="match status" value="1"/>
</dbReference>
<dbReference type="SUPFAM" id="SSF110942">
    <property type="entry name" value="HSP90 C-terminal domain"/>
    <property type="match status" value="1"/>
</dbReference>
<dbReference type="SUPFAM" id="SSF54211">
    <property type="entry name" value="Ribosomal protein S5 domain 2-like"/>
    <property type="match status" value="1"/>
</dbReference>
<dbReference type="PROSITE" id="PS00298">
    <property type="entry name" value="HSP90"/>
    <property type="match status" value="1"/>
</dbReference>
<gene>
    <name evidence="1" type="primary">htpG</name>
    <name type="ordered locus">WS1737</name>
</gene>
<reference key="1">
    <citation type="journal article" date="2003" name="Proc. Natl. Acad. Sci. U.S.A.">
        <title>Complete genome sequence and analysis of Wolinella succinogenes.</title>
        <authorList>
            <person name="Baar C."/>
            <person name="Eppinger M."/>
            <person name="Raddatz G."/>
            <person name="Simon J."/>
            <person name="Lanz C."/>
            <person name="Klimmek O."/>
            <person name="Nandakumar R."/>
            <person name="Gross R."/>
            <person name="Rosinus A."/>
            <person name="Keller H."/>
            <person name="Jagtap P."/>
            <person name="Linke B."/>
            <person name="Meyer F."/>
            <person name="Lederer H."/>
            <person name="Schuster S.C."/>
        </authorList>
    </citation>
    <scope>NUCLEOTIDE SEQUENCE [LARGE SCALE GENOMIC DNA]</scope>
    <source>
        <strain>ATCC 29543 / DSM 1740 / CCUG 13145 / JCM 31913 / LMG 7466 / NCTC 11488 / FDC 602W</strain>
    </source>
</reference>
<proteinExistence type="inferred from homology"/>
<name>HTPG_WOLSU</name>
<accession>Q7M8C4</accession>
<sequence>MAKHTFQTEVNQLLDLMIHSLYSNKEIFLRELISNASDALEKLQYLTLTDENLKNLQYTPRIDIHFDEEKKILTLSDTGIGMNESDLVENLGTIAKSGTKSFVSRLSGDKKKDSALIGQFGVGFYAAFMVADKIVVTTKKAGEESAYAWLSEGKGDYEITPCSKESHGTEIKLFLKEEEKEFASRWRLEEIIKKYSDHIPFPIFLHYTQKKNDQEESKEEQVNKAFALWRISKNELKEEDYKEFYKSLSHDSHDPLAWVHIKVEGSQEYTTLFYLPSKAPFDLYRVDYRSGVKLYVKRVFITDDDKELLPSYLRFVRGIIDSEDLPLNVSREILQQNRILANIKSASTKKILAEIENLAKDEEKYEAFFKEFGRALKEGLYGDFENKEKLLELMRFHSSLSPNKKISLQSYKERMKEGQKAIYYLMGENADLLQNSPLLEKFKKREIEVLFFDEEIDSIVMPMVNQYGDLPLKAINSAEADKDFEEESVSEEEKERFKPLLERFEKALSGEIKSVRLSKRLVDSPACVVADEDDPNFAMIKMMRQMGNALGDFPEPKPILELNPEHPMVGKLLALEDEERASDYAHLLLDQAKLLESGSLKDAVGFAKRLNAMLERAI</sequence>